<accession>Q6HEN5</accession>
<gene>
    <name evidence="1" type="primary">coaD</name>
    <name type="ordered locus">BT9727_3671</name>
</gene>
<reference key="1">
    <citation type="journal article" date="2006" name="J. Bacteriol.">
        <title>Pathogenomic sequence analysis of Bacillus cereus and Bacillus thuringiensis isolates closely related to Bacillus anthracis.</title>
        <authorList>
            <person name="Han C.S."/>
            <person name="Xie G."/>
            <person name="Challacombe J.F."/>
            <person name="Altherr M.R."/>
            <person name="Bhotika S.S."/>
            <person name="Bruce D."/>
            <person name="Campbell C.S."/>
            <person name="Campbell M.L."/>
            <person name="Chen J."/>
            <person name="Chertkov O."/>
            <person name="Cleland C."/>
            <person name="Dimitrijevic M."/>
            <person name="Doggett N.A."/>
            <person name="Fawcett J.J."/>
            <person name="Glavina T."/>
            <person name="Goodwin L.A."/>
            <person name="Hill K.K."/>
            <person name="Hitchcock P."/>
            <person name="Jackson P.J."/>
            <person name="Keim P."/>
            <person name="Kewalramani A.R."/>
            <person name="Longmire J."/>
            <person name="Lucas S."/>
            <person name="Malfatti S."/>
            <person name="McMurry K."/>
            <person name="Meincke L.J."/>
            <person name="Misra M."/>
            <person name="Moseman B.L."/>
            <person name="Mundt M."/>
            <person name="Munk A.C."/>
            <person name="Okinaka R.T."/>
            <person name="Parson-Quintana B."/>
            <person name="Reilly L.P."/>
            <person name="Richardson P."/>
            <person name="Robinson D.L."/>
            <person name="Rubin E."/>
            <person name="Saunders E."/>
            <person name="Tapia R."/>
            <person name="Tesmer J.G."/>
            <person name="Thayer N."/>
            <person name="Thompson L.S."/>
            <person name="Tice H."/>
            <person name="Ticknor L.O."/>
            <person name="Wills P.L."/>
            <person name="Brettin T.S."/>
            <person name="Gilna P."/>
        </authorList>
    </citation>
    <scope>NUCLEOTIDE SEQUENCE [LARGE SCALE GENOMIC DNA]</scope>
    <source>
        <strain>97-27</strain>
    </source>
</reference>
<feature type="chain" id="PRO_0000156167" description="Phosphopantetheine adenylyltransferase">
    <location>
        <begin position="1"/>
        <end position="163"/>
    </location>
</feature>
<feature type="binding site" evidence="1">
    <location>
        <begin position="10"/>
        <end position="11"/>
    </location>
    <ligand>
        <name>ATP</name>
        <dbReference type="ChEBI" id="CHEBI:30616"/>
    </ligand>
</feature>
<feature type="binding site" evidence="1">
    <location>
        <position position="10"/>
    </location>
    <ligand>
        <name>substrate</name>
    </ligand>
</feature>
<feature type="binding site" evidence="1">
    <location>
        <position position="18"/>
    </location>
    <ligand>
        <name>ATP</name>
        <dbReference type="ChEBI" id="CHEBI:30616"/>
    </ligand>
</feature>
<feature type="binding site" evidence="1">
    <location>
        <position position="42"/>
    </location>
    <ligand>
        <name>substrate</name>
    </ligand>
</feature>
<feature type="binding site" evidence="1">
    <location>
        <position position="74"/>
    </location>
    <ligand>
        <name>substrate</name>
    </ligand>
</feature>
<feature type="binding site" evidence="1">
    <location>
        <position position="88"/>
    </location>
    <ligand>
        <name>substrate</name>
    </ligand>
</feature>
<feature type="binding site" evidence="1">
    <location>
        <begin position="89"/>
        <end position="91"/>
    </location>
    <ligand>
        <name>ATP</name>
        <dbReference type="ChEBI" id="CHEBI:30616"/>
    </ligand>
</feature>
<feature type="binding site" evidence="1">
    <location>
        <position position="99"/>
    </location>
    <ligand>
        <name>ATP</name>
        <dbReference type="ChEBI" id="CHEBI:30616"/>
    </ligand>
</feature>
<feature type="binding site" evidence="1">
    <location>
        <begin position="124"/>
        <end position="130"/>
    </location>
    <ligand>
        <name>ATP</name>
        <dbReference type="ChEBI" id="CHEBI:30616"/>
    </ligand>
</feature>
<feature type="site" description="Transition state stabilizer" evidence="1">
    <location>
        <position position="18"/>
    </location>
</feature>
<protein>
    <recommendedName>
        <fullName evidence="1">Phosphopantetheine adenylyltransferase</fullName>
        <ecNumber evidence="1">2.7.7.3</ecNumber>
    </recommendedName>
    <alternativeName>
        <fullName evidence="1">Dephospho-CoA pyrophosphorylase</fullName>
    </alternativeName>
    <alternativeName>
        <fullName evidence="1">Pantetheine-phosphate adenylyltransferase</fullName>
        <shortName evidence="1">PPAT</shortName>
    </alternativeName>
</protein>
<keyword id="KW-0067">ATP-binding</keyword>
<keyword id="KW-0173">Coenzyme A biosynthesis</keyword>
<keyword id="KW-0963">Cytoplasm</keyword>
<keyword id="KW-0460">Magnesium</keyword>
<keyword id="KW-0547">Nucleotide-binding</keyword>
<keyword id="KW-0548">Nucleotidyltransferase</keyword>
<keyword id="KW-0808">Transferase</keyword>
<name>COAD_BACHK</name>
<sequence length="163" mass="18379">MTSIAISSGSFDPITLGHLDIIKRGAKVFDEVYVVVLNNSSKKPFFSVEERLDLIREATKDIPNVKVDSHSGLLVEYAKMRNANAILRGLRAVSDFEYEMQITSMNRKLDENIETFFIMTNNQYSFLSSSIVKEVARYGGSVVDLVPPVVERALKEKFQTPLK</sequence>
<dbReference type="EC" id="2.7.7.3" evidence="1"/>
<dbReference type="EMBL" id="AE017355">
    <property type="protein sequence ID" value="AAT60656.1"/>
    <property type="molecule type" value="Genomic_DNA"/>
</dbReference>
<dbReference type="RefSeq" id="WP_000200598.1">
    <property type="nucleotide sequence ID" value="NC_005957.1"/>
</dbReference>
<dbReference type="RefSeq" id="YP_037991.1">
    <property type="nucleotide sequence ID" value="NC_005957.1"/>
</dbReference>
<dbReference type="SMR" id="Q6HEN5"/>
<dbReference type="GeneID" id="92799798"/>
<dbReference type="KEGG" id="btk:BT9727_3671"/>
<dbReference type="PATRIC" id="fig|281309.8.peg.3910"/>
<dbReference type="HOGENOM" id="CLU_100149_0_1_9"/>
<dbReference type="UniPathway" id="UPA00241">
    <property type="reaction ID" value="UER00355"/>
</dbReference>
<dbReference type="Proteomes" id="UP000001301">
    <property type="component" value="Chromosome"/>
</dbReference>
<dbReference type="GO" id="GO:0005737">
    <property type="term" value="C:cytoplasm"/>
    <property type="evidence" value="ECO:0007669"/>
    <property type="project" value="UniProtKB-SubCell"/>
</dbReference>
<dbReference type="GO" id="GO:0005524">
    <property type="term" value="F:ATP binding"/>
    <property type="evidence" value="ECO:0007669"/>
    <property type="project" value="UniProtKB-KW"/>
</dbReference>
<dbReference type="GO" id="GO:0004595">
    <property type="term" value="F:pantetheine-phosphate adenylyltransferase activity"/>
    <property type="evidence" value="ECO:0007669"/>
    <property type="project" value="UniProtKB-UniRule"/>
</dbReference>
<dbReference type="GO" id="GO:0015937">
    <property type="term" value="P:coenzyme A biosynthetic process"/>
    <property type="evidence" value="ECO:0007669"/>
    <property type="project" value="UniProtKB-UniRule"/>
</dbReference>
<dbReference type="CDD" id="cd02163">
    <property type="entry name" value="PPAT"/>
    <property type="match status" value="1"/>
</dbReference>
<dbReference type="FunFam" id="3.40.50.620:FF:000012">
    <property type="entry name" value="Phosphopantetheine adenylyltransferase"/>
    <property type="match status" value="1"/>
</dbReference>
<dbReference type="Gene3D" id="3.40.50.620">
    <property type="entry name" value="HUPs"/>
    <property type="match status" value="1"/>
</dbReference>
<dbReference type="HAMAP" id="MF_00151">
    <property type="entry name" value="PPAT_bact"/>
    <property type="match status" value="1"/>
</dbReference>
<dbReference type="InterPro" id="IPR004821">
    <property type="entry name" value="Cyt_trans-like"/>
</dbReference>
<dbReference type="InterPro" id="IPR001980">
    <property type="entry name" value="PPAT"/>
</dbReference>
<dbReference type="InterPro" id="IPR014729">
    <property type="entry name" value="Rossmann-like_a/b/a_fold"/>
</dbReference>
<dbReference type="NCBIfam" id="TIGR01510">
    <property type="entry name" value="coaD_prev_kdtB"/>
    <property type="match status" value="1"/>
</dbReference>
<dbReference type="NCBIfam" id="TIGR00125">
    <property type="entry name" value="cyt_tran_rel"/>
    <property type="match status" value="1"/>
</dbReference>
<dbReference type="PANTHER" id="PTHR21342">
    <property type="entry name" value="PHOSPHOPANTETHEINE ADENYLYLTRANSFERASE"/>
    <property type="match status" value="1"/>
</dbReference>
<dbReference type="PANTHER" id="PTHR21342:SF1">
    <property type="entry name" value="PHOSPHOPANTETHEINE ADENYLYLTRANSFERASE"/>
    <property type="match status" value="1"/>
</dbReference>
<dbReference type="Pfam" id="PF01467">
    <property type="entry name" value="CTP_transf_like"/>
    <property type="match status" value="1"/>
</dbReference>
<dbReference type="PRINTS" id="PR01020">
    <property type="entry name" value="LPSBIOSNTHSS"/>
</dbReference>
<dbReference type="SUPFAM" id="SSF52374">
    <property type="entry name" value="Nucleotidylyl transferase"/>
    <property type="match status" value="1"/>
</dbReference>
<organism>
    <name type="scientific">Bacillus thuringiensis subsp. konkukian (strain 97-27)</name>
    <dbReference type="NCBI Taxonomy" id="281309"/>
    <lineage>
        <taxon>Bacteria</taxon>
        <taxon>Bacillati</taxon>
        <taxon>Bacillota</taxon>
        <taxon>Bacilli</taxon>
        <taxon>Bacillales</taxon>
        <taxon>Bacillaceae</taxon>
        <taxon>Bacillus</taxon>
        <taxon>Bacillus cereus group</taxon>
    </lineage>
</organism>
<comment type="function">
    <text evidence="1">Reversibly transfers an adenylyl group from ATP to 4'-phosphopantetheine, yielding dephospho-CoA (dPCoA) and pyrophosphate.</text>
</comment>
<comment type="catalytic activity">
    <reaction evidence="1">
        <text>(R)-4'-phosphopantetheine + ATP + H(+) = 3'-dephospho-CoA + diphosphate</text>
        <dbReference type="Rhea" id="RHEA:19801"/>
        <dbReference type="ChEBI" id="CHEBI:15378"/>
        <dbReference type="ChEBI" id="CHEBI:30616"/>
        <dbReference type="ChEBI" id="CHEBI:33019"/>
        <dbReference type="ChEBI" id="CHEBI:57328"/>
        <dbReference type="ChEBI" id="CHEBI:61723"/>
        <dbReference type="EC" id="2.7.7.3"/>
    </reaction>
</comment>
<comment type="cofactor">
    <cofactor evidence="1">
        <name>Mg(2+)</name>
        <dbReference type="ChEBI" id="CHEBI:18420"/>
    </cofactor>
</comment>
<comment type="pathway">
    <text evidence="1">Cofactor biosynthesis; coenzyme A biosynthesis; CoA from (R)-pantothenate: step 4/5.</text>
</comment>
<comment type="subunit">
    <text evidence="1">Homohexamer.</text>
</comment>
<comment type="subcellular location">
    <subcellularLocation>
        <location evidence="1">Cytoplasm</location>
    </subcellularLocation>
</comment>
<comment type="similarity">
    <text evidence="1">Belongs to the bacterial CoaD family.</text>
</comment>
<proteinExistence type="inferred from homology"/>
<evidence type="ECO:0000255" key="1">
    <source>
        <dbReference type="HAMAP-Rule" id="MF_00151"/>
    </source>
</evidence>